<evidence type="ECO:0000255" key="1">
    <source>
        <dbReference type="HAMAP-Rule" id="MF_00033"/>
    </source>
</evidence>
<organism>
    <name type="scientific">Staphylococcus aureus (strain Newman)</name>
    <dbReference type="NCBI Taxonomy" id="426430"/>
    <lineage>
        <taxon>Bacteria</taxon>
        <taxon>Bacillati</taxon>
        <taxon>Bacillota</taxon>
        <taxon>Bacilli</taxon>
        <taxon>Bacillales</taxon>
        <taxon>Staphylococcaceae</taxon>
        <taxon>Staphylococcus</taxon>
    </lineage>
</organism>
<reference key="1">
    <citation type="journal article" date="2008" name="J. Bacteriol.">
        <title>Genome sequence of Staphylococcus aureus strain Newman and comparative analysis of staphylococcal genomes: polymorphism and evolution of two major pathogenicity islands.</title>
        <authorList>
            <person name="Baba T."/>
            <person name="Bae T."/>
            <person name="Schneewind O."/>
            <person name="Takeuchi F."/>
            <person name="Hiramatsu K."/>
        </authorList>
    </citation>
    <scope>NUCLEOTIDE SEQUENCE [LARGE SCALE GENOMIC DNA]</scope>
    <source>
        <strain>Newman</strain>
    </source>
</reference>
<name>MURG_STAAE</name>
<keyword id="KW-0131">Cell cycle</keyword>
<keyword id="KW-0132">Cell division</keyword>
<keyword id="KW-1003">Cell membrane</keyword>
<keyword id="KW-0133">Cell shape</keyword>
<keyword id="KW-0961">Cell wall biogenesis/degradation</keyword>
<keyword id="KW-0328">Glycosyltransferase</keyword>
<keyword id="KW-0472">Membrane</keyword>
<keyword id="KW-0573">Peptidoglycan synthesis</keyword>
<keyword id="KW-0808">Transferase</keyword>
<protein>
    <recommendedName>
        <fullName evidence="1">UDP-N-acetylglucosamine--N-acetylmuramyl-(pentapeptide) pyrophosphoryl-undecaprenol N-acetylglucosamine transferase</fullName>
        <ecNumber evidence="1">2.4.1.227</ecNumber>
    </recommendedName>
    <alternativeName>
        <fullName evidence="1">Undecaprenyl-PP-MurNAc-pentapeptide-UDPGlcNAc GlcNAc transferase</fullName>
    </alternativeName>
</protein>
<proteinExistence type="inferred from homology"/>
<sequence length="356" mass="39697">MTKIAFTGGGTVGHVSVNLSLIPTALSQGYEALYIGSKNGIEREMIESQLPEIKYYPISSGKLRRYISLENAKDVFKVLKGILDARKVLKKEKPDLLFSKGGFVSVPVVIAAKSLNIPTIIHESDLTPGLANKIALKFAKKIYTTFEETLNYLPKEKADFIGATIREDLKNGNAHNGYQLTGFNENKKVLLVMGGSLGSKKLNSIIRENLDALLQQYQVIHLTGKGLKDAQVKKSGYIQYEFVKEDLTDLLAITDTVISRAGSNAIYEFLTLRIPMLLVPLGLDQSRGDQIDNANHFADKGYAKAIDEEQLTAQILLQELNEMEQERTRIINNMKSYEQSYTKEALFDKMIKDALN</sequence>
<comment type="function">
    <text evidence="1">Cell wall formation. Catalyzes the transfer of a GlcNAc subunit on undecaprenyl-pyrophosphoryl-MurNAc-pentapeptide (lipid intermediate I) to form undecaprenyl-pyrophosphoryl-MurNAc-(pentapeptide)GlcNAc (lipid intermediate II).</text>
</comment>
<comment type="catalytic activity">
    <reaction evidence="1">
        <text>Mur2Ac(oyl-L-Ala-gamma-D-Glu-L-Lys-D-Ala-D-Ala)-di-trans,octa-cis-undecaprenyl diphosphate + UDP-N-acetyl-alpha-D-glucosamine = beta-D-GlcNAc-(1-&gt;4)-Mur2Ac(oyl-L-Ala-gamma-D-Glu-L-Lys-D-Ala-D-Ala)-di-trans,octa-cis-undecaprenyl diphosphate + UDP + H(+)</text>
        <dbReference type="Rhea" id="RHEA:23192"/>
        <dbReference type="ChEBI" id="CHEBI:15378"/>
        <dbReference type="ChEBI" id="CHEBI:57705"/>
        <dbReference type="ChEBI" id="CHEBI:58223"/>
        <dbReference type="ChEBI" id="CHEBI:60032"/>
        <dbReference type="ChEBI" id="CHEBI:60033"/>
        <dbReference type="EC" id="2.4.1.227"/>
    </reaction>
</comment>
<comment type="pathway">
    <text evidence="1">Cell wall biogenesis; peptidoglycan biosynthesis.</text>
</comment>
<comment type="subcellular location">
    <subcellularLocation>
        <location evidence="1">Cell membrane</location>
        <topology evidence="1">Peripheral membrane protein</topology>
        <orientation evidence="1">Cytoplasmic side</orientation>
    </subcellularLocation>
</comment>
<comment type="similarity">
    <text evidence="1">Belongs to the glycosyltransferase 28 family. MurG subfamily.</text>
</comment>
<gene>
    <name evidence="1" type="primary">murG</name>
    <name type="ordered locus">NWMN_1330</name>
</gene>
<accession>A6QGX0</accession>
<feature type="chain" id="PRO_1000071026" description="UDP-N-acetylglucosamine--N-acetylmuramyl-(pentapeptide) pyrophosphoryl-undecaprenol N-acetylglucosamine transferase">
    <location>
        <begin position="1"/>
        <end position="356"/>
    </location>
</feature>
<feature type="binding site" evidence="1">
    <location>
        <position position="166"/>
    </location>
    <ligand>
        <name>UDP-N-acetyl-alpha-D-glucosamine</name>
        <dbReference type="ChEBI" id="CHEBI:57705"/>
    </ligand>
</feature>
<feature type="binding site" evidence="1">
    <location>
        <position position="196"/>
    </location>
    <ligand>
        <name>UDP-N-acetyl-alpha-D-glucosamine</name>
        <dbReference type="ChEBI" id="CHEBI:57705"/>
    </ligand>
</feature>
<feature type="binding site" evidence="1">
    <location>
        <position position="290"/>
    </location>
    <ligand>
        <name>UDP-N-acetyl-alpha-D-glucosamine</name>
        <dbReference type="ChEBI" id="CHEBI:57705"/>
    </ligand>
</feature>
<dbReference type="EC" id="2.4.1.227" evidence="1"/>
<dbReference type="EMBL" id="AP009351">
    <property type="protein sequence ID" value="BAF67602.1"/>
    <property type="molecule type" value="Genomic_DNA"/>
</dbReference>
<dbReference type="RefSeq" id="WP_000160904.1">
    <property type="nucleotide sequence ID" value="NZ_JBBIAE010000001.1"/>
</dbReference>
<dbReference type="SMR" id="A6QGX0"/>
<dbReference type="CAZy" id="GT28">
    <property type="family name" value="Glycosyltransferase Family 28"/>
</dbReference>
<dbReference type="KEGG" id="sae:NWMN_1330"/>
<dbReference type="HOGENOM" id="CLU_037404_0_0_9"/>
<dbReference type="UniPathway" id="UPA00219"/>
<dbReference type="Proteomes" id="UP000006386">
    <property type="component" value="Chromosome"/>
</dbReference>
<dbReference type="GO" id="GO:0005886">
    <property type="term" value="C:plasma membrane"/>
    <property type="evidence" value="ECO:0007669"/>
    <property type="project" value="UniProtKB-SubCell"/>
</dbReference>
<dbReference type="GO" id="GO:0050511">
    <property type="term" value="F:undecaprenyldiphospho-muramoylpentapeptide beta-N-acetylglucosaminyltransferase activity"/>
    <property type="evidence" value="ECO:0007669"/>
    <property type="project" value="UniProtKB-UniRule"/>
</dbReference>
<dbReference type="GO" id="GO:0005975">
    <property type="term" value="P:carbohydrate metabolic process"/>
    <property type="evidence" value="ECO:0007669"/>
    <property type="project" value="InterPro"/>
</dbReference>
<dbReference type="GO" id="GO:0051301">
    <property type="term" value="P:cell division"/>
    <property type="evidence" value="ECO:0007669"/>
    <property type="project" value="UniProtKB-KW"/>
</dbReference>
<dbReference type="GO" id="GO:0071555">
    <property type="term" value="P:cell wall organization"/>
    <property type="evidence" value="ECO:0007669"/>
    <property type="project" value="UniProtKB-KW"/>
</dbReference>
<dbReference type="GO" id="GO:0030259">
    <property type="term" value="P:lipid glycosylation"/>
    <property type="evidence" value="ECO:0007669"/>
    <property type="project" value="UniProtKB-UniRule"/>
</dbReference>
<dbReference type="GO" id="GO:0009252">
    <property type="term" value="P:peptidoglycan biosynthetic process"/>
    <property type="evidence" value="ECO:0007669"/>
    <property type="project" value="UniProtKB-UniRule"/>
</dbReference>
<dbReference type="GO" id="GO:0008360">
    <property type="term" value="P:regulation of cell shape"/>
    <property type="evidence" value="ECO:0007669"/>
    <property type="project" value="UniProtKB-KW"/>
</dbReference>
<dbReference type="CDD" id="cd03785">
    <property type="entry name" value="GT28_MurG"/>
    <property type="match status" value="1"/>
</dbReference>
<dbReference type="Gene3D" id="3.40.50.2000">
    <property type="entry name" value="Glycogen Phosphorylase B"/>
    <property type="match status" value="2"/>
</dbReference>
<dbReference type="HAMAP" id="MF_00033">
    <property type="entry name" value="MurG"/>
    <property type="match status" value="1"/>
</dbReference>
<dbReference type="InterPro" id="IPR006009">
    <property type="entry name" value="GlcNAc_MurG"/>
</dbReference>
<dbReference type="InterPro" id="IPR007235">
    <property type="entry name" value="Glyco_trans_28_C"/>
</dbReference>
<dbReference type="InterPro" id="IPR004276">
    <property type="entry name" value="GlycoTrans_28_N"/>
</dbReference>
<dbReference type="NCBIfam" id="NF009102">
    <property type="entry name" value="PRK12446.1"/>
    <property type="match status" value="1"/>
</dbReference>
<dbReference type="PANTHER" id="PTHR21015:SF27">
    <property type="entry name" value="UDP-N-ACETYLGLUCOSAMINE--N-ACETYLMURAMYL-(PENTAPEPTIDE) PYROPHOSPHORYL-UNDECAPRENOL N-ACETYLGLUCOSAMINE TRANSFERASE"/>
    <property type="match status" value="1"/>
</dbReference>
<dbReference type="PANTHER" id="PTHR21015">
    <property type="entry name" value="UDP-N-ACETYLGLUCOSAMINE--N-ACETYLMURAMYL-(PENTAPEPTIDE) PYROPHOSPHORYL-UNDECAPRENOL N-ACETYLGLUCOSAMINE TRANSFERASE 1"/>
    <property type="match status" value="1"/>
</dbReference>
<dbReference type="Pfam" id="PF04101">
    <property type="entry name" value="Glyco_tran_28_C"/>
    <property type="match status" value="1"/>
</dbReference>
<dbReference type="Pfam" id="PF03033">
    <property type="entry name" value="Glyco_transf_28"/>
    <property type="match status" value="1"/>
</dbReference>
<dbReference type="SUPFAM" id="SSF53756">
    <property type="entry name" value="UDP-Glycosyltransferase/glycogen phosphorylase"/>
    <property type="match status" value="1"/>
</dbReference>